<protein>
    <recommendedName>
        <fullName evidence="1">Argininosuccinate synthase</fullName>
        <ecNumber evidence="1">6.3.4.5</ecNumber>
    </recommendedName>
    <alternativeName>
        <fullName evidence="1">Citrulline--aspartate ligase</fullName>
    </alternativeName>
</protein>
<evidence type="ECO:0000255" key="1">
    <source>
        <dbReference type="HAMAP-Rule" id="MF_00005"/>
    </source>
</evidence>
<name>ASSY_RHILO</name>
<proteinExistence type="inferred from homology"/>
<dbReference type="EC" id="6.3.4.5" evidence="1"/>
<dbReference type="EMBL" id="BA000012">
    <property type="protein sequence ID" value="BAB51039.1"/>
    <property type="molecule type" value="Genomic_DNA"/>
</dbReference>
<dbReference type="RefSeq" id="WP_010912381.1">
    <property type="nucleotide sequence ID" value="NC_002678.2"/>
</dbReference>
<dbReference type="SMR" id="Q98E81"/>
<dbReference type="KEGG" id="mlo:mlr4366"/>
<dbReference type="eggNOG" id="COG0137">
    <property type="taxonomic scope" value="Bacteria"/>
</dbReference>
<dbReference type="HOGENOM" id="CLU_032784_4_2_5"/>
<dbReference type="UniPathway" id="UPA00068">
    <property type="reaction ID" value="UER00113"/>
</dbReference>
<dbReference type="Proteomes" id="UP000000552">
    <property type="component" value="Chromosome"/>
</dbReference>
<dbReference type="GO" id="GO:0005737">
    <property type="term" value="C:cytoplasm"/>
    <property type="evidence" value="ECO:0007669"/>
    <property type="project" value="UniProtKB-SubCell"/>
</dbReference>
<dbReference type="GO" id="GO:0004055">
    <property type="term" value="F:argininosuccinate synthase activity"/>
    <property type="evidence" value="ECO:0007669"/>
    <property type="project" value="UniProtKB-UniRule"/>
</dbReference>
<dbReference type="GO" id="GO:0005524">
    <property type="term" value="F:ATP binding"/>
    <property type="evidence" value="ECO:0007669"/>
    <property type="project" value="UniProtKB-UniRule"/>
</dbReference>
<dbReference type="GO" id="GO:0000053">
    <property type="term" value="P:argininosuccinate metabolic process"/>
    <property type="evidence" value="ECO:0007669"/>
    <property type="project" value="TreeGrafter"/>
</dbReference>
<dbReference type="GO" id="GO:0006526">
    <property type="term" value="P:L-arginine biosynthetic process"/>
    <property type="evidence" value="ECO:0007669"/>
    <property type="project" value="UniProtKB-UniRule"/>
</dbReference>
<dbReference type="GO" id="GO:0000050">
    <property type="term" value="P:urea cycle"/>
    <property type="evidence" value="ECO:0007669"/>
    <property type="project" value="TreeGrafter"/>
</dbReference>
<dbReference type="CDD" id="cd01999">
    <property type="entry name" value="ASS"/>
    <property type="match status" value="1"/>
</dbReference>
<dbReference type="FunFam" id="3.40.50.620:FF:000019">
    <property type="entry name" value="Argininosuccinate synthase"/>
    <property type="match status" value="1"/>
</dbReference>
<dbReference type="FunFam" id="3.90.1260.10:FF:000007">
    <property type="entry name" value="Argininosuccinate synthase"/>
    <property type="match status" value="1"/>
</dbReference>
<dbReference type="Gene3D" id="3.90.1260.10">
    <property type="entry name" value="Argininosuccinate synthetase, chain A, domain 2"/>
    <property type="match status" value="1"/>
</dbReference>
<dbReference type="Gene3D" id="3.40.50.620">
    <property type="entry name" value="HUPs"/>
    <property type="match status" value="1"/>
</dbReference>
<dbReference type="Gene3D" id="1.20.5.470">
    <property type="entry name" value="Single helix bin"/>
    <property type="match status" value="1"/>
</dbReference>
<dbReference type="HAMAP" id="MF_00005">
    <property type="entry name" value="Arg_succ_synth_type1"/>
    <property type="match status" value="1"/>
</dbReference>
<dbReference type="InterPro" id="IPR048268">
    <property type="entry name" value="Arginosuc_syn_C"/>
</dbReference>
<dbReference type="InterPro" id="IPR048267">
    <property type="entry name" value="Arginosuc_syn_N"/>
</dbReference>
<dbReference type="InterPro" id="IPR001518">
    <property type="entry name" value="Arginosuc_synth"/>
</dbReference>
<dbReference type="InterPro" id="IPR018223">
    <property type="entry name" value="Arginosuc_synth_CS"/>
</dbReference>
<dbReference type="InterPro" id="IPR023434">
    <property type="entry name" value="Arginosuc_synth_type_1_subfam"/>
</dbReference>
<dbReference type="InterPro" id="IPR024074">
    <property type="entry name" value="AS_cat/multimer_dom_body"/>
</dbReference>
<dbReference type="InterPro" id="IPR014729">
    <property type="entry name" value="Rossmann-like_a/b/a_fold"/>
</dbReference>
<dbReference type="NCBIfam" id="TIGR00032">
    <property type="entry name" value="argG"/>
    <property type="match status" value="1"/>
</dbReference>
<dbReference type="NCBIfam" id="NF001770">
    <property type="entry name" value="PRK00509.1"/>
    <property type="match status" value="1"/>
</dbReference>
<dbReference type="PANTHER" id="PTHR11587">
    <property type="entry name" value="ARGININOSUCCINATE SYNTHASE"/>
    <property type="match status" value="1"/>
</dbReference>
<dbReference type="PANTHER" id="PTHR11587:SF2">
    <property type="entry name" value="ARGININOSUCCINATE SYNTHASE"/>
    <property type="match status" value="1"/>
</dbReference>
<dbReference type="Pfam" id="PF20979">
    <property type="entry name" value="Arginosuc_syn_C"/>
    <property type="match status" value="1"/>
</dbReference>
<dbReference type="Pfam" id="PF00764">
    <property type="entry name" value="Arginosuc_synth"/>
    <property type="match status" value="1"/>
</dbReference>
<dbReference type="SUPFAM" id="SSF52402">
    <property type="entry name" value="Adenine nucleotide alpha hydrolases-like"/>
    <property type="match status" value="1"/>
</dbReference>
<dbReference type="SUPFAM" id="SSF69864">
    <property type="entry name" value="Argininosuccinate synthetase, C-terminal domain"/>
    <property type="match status" value="1"/>
</dbReference>
<dbReference type="PROSITE" id="PS00564">
    <property type="entry name" value="ARGININOSUCCIN_SYN_1"/>
    <property type="match status" value="1"/>
</dbReference>
<dbReference type="PROSITE" id="PS00565">
    <property type="entry name" value="ARGININOSUCCIN_SYN_2"/>
    <property type="match status" value="1"/>
</dbReference>
<feature type="chain" id="PRO_0000148629" description="Argininosuccinate synthase">
    <location>
        <begin position="1"/>
        <end position="407"/>
    </location>
</feature>
<feature type="binding site" evidence="1">
    <location>
        <begin position="13"/>
        <end position="21"/>
    </location>
    <ligand>
        <name>ATP</name>
        <dbReference type="ChEBI" id="CHEBI:30616"/>
    </ligand>
</feature>
<feature type="binding site" evidence="1">
    <location>
        <position position="40"/>
    </location>
    <ligand>
        <name>ATP</name>
        <dbReference type="ChEBI" id="CHEBI:30616"/>
    </ligand>
</feature>
<feature type="binding site" evidence="1">
    <location>
        <position position="91"/>
    </location>
    <ligand>
        <name>L-citrulline</name>
        <dbReference type="ChEBI" id="CHEBI:57743"/>
    </ligand>
</feature>
<feature type="binding site" evidence="1">
    <location>
        <position position="96"/>
    </location>
    <ligand>
        <name>L-citrulline</name>
        <dbReference type="ChEBI" id="CHEBI:57743"/>
    </ligand>
</feature>
<feature type="binding site" evidence="1">
    <location>
        <position position="121"/>
    </location>
    <ligand>
        <name>ATP</name>
        <dbReference type="ChEBI" id="CHEBI:30616"/>
    </ligand>
</feature>
<feature type="binding site" evidence="1">
    <location>
        <position position="123"/>
    </location>
    <ligand>
        <name>L-aspartate</name>
        <dbReference type="ChEBI" id="CHEBI:29991"/>
    </ligand>
</feature>
<feature type="binding site" evidence="1">
    <location>
        <position position="127"/>
    </location>
    <ligand>
        <name>L-aspartate</name>
        <dbReference type="ChEBI" id="CHEBI:29991"/>
    </ligand>
</feature>
<feature type="binding site" evidence="1">
    <location>
        <position position="127"/>
    </location>
    <ligand>
        <name>L-citrulline</name>
        <dbReference type="ChEBI" id="CHEBI:57743"/>
    </ligand>
</feature>
<feature type="binding site" evidence="1">
    <location>
        <position position="128"/>
    </location>
    <ligand>
        <name>L-aspartate</name>
        <dbReference type="ChEBI" id="CHEBI:29991"/>
    </ligand>
</feature>
<feature type="binding site" evidence="1">
    <location>
        <position position="131"/>
    </location>
    <ligand>
        <name>L-citrulline</name>
        <dbReference type="ChEBI" id="CHEBI:57743"/>
    </ligand>
</feature>
<feature type="binding site" evidence="1">
    <location>
        <position position="182"/>
    </location>
    <ligand>
        <name>L-citrulline</name>
        <dbReference type="ChEBI" id="CHEBI:57743"/>
    </ligand>
</feature>
<feature type="binding site" evidence="1">
    <location>
        <position position="191"/>
    </location>
    <ligand>
        <name>L-citrulline</name>
        <dbReference type="ChEBI" id="CHEBI:57743"/>
    </ligand>
</feature>
<feature type="binding site" evidence="1">
    <location>
        <position position="267"/>
    </location>
    <ligand>
        <name>L-citrulline</name>
        <dbReference type="ChEBI" id="CHEBI:57743"/>
    </ligand>
</feature>
<feature type="binding site" evidence="1">
    <location>
        <position position="279"/>
    </location>
    <ligand>
        <name>L-citrulline</name>
        <dbReference type="ChEBI" id="CHEBI:57743"/>
    </ligand>
</feature>
<accession>Q98E81</accession>
<keyword id="KW-0028">Amino-acid biosynthesis</keyword>
<keyword id="KW-0055">Arginine biosynthesis</keyword>
<keyword id="KW-0067">ATP-binding</keyword>
<keyword id="KW-0963">Cytoplasm</keyword>
<keyword id="KW-0436">Ligase</keyword>
<keyword id="KW-0547">Nucleotide-binding</keyword>
<sequence length="407" mass="45230">MSKTKDVKKVVLAYSGGLDTSIILKWLQTELGAEVVTFTADLGQGGELEPARKKAEMMGIKDIRIVDVREEFVADFVFPMFRANTVYEGTYLLGTSIARPLISKHLVDIARETGADAIAHGATGKGNDQVRFELSAYALNPDIKVIAPWRDWSFKSRTDLINFAEQHQIPVAKDKRGEAPFSVDANLLHSSSEGKVLEDPWSEPPEFVHQRTVSPMDAPDKVTEIEIEFLKGDPIALNGKKLSPATMLAALNDLGRDNGIGRLDLVENRFVGMKSRGVYETPGGAILIVAHRAIESITLDRGAAHLKDEFMPRYAELIYNGFWFSPERLMLQAMIDKSQEDVEGTVRLKLYKGNVMVTGRKSKKTLYSDALVTFEDDRGAYDQKDAAGFIRLNALRLRTLAARNRKG</sequence>
<reference key="1">
    <citation type="journal article" date="2000" name="DNA Res.">
        <title>Complete genome structure of the nitrogen-fixing symbiotic bacterium Mesorhizobium loti.</title>
        <authorList>
            <person name="Kaneko T."/>
            <person name="Nakamura Y."/>
            <person name="Sato S."/>
            <person name="Asamizu E."/>
            <person name="Kato T."/>
            <person name="Sasamoto S."/>
            <person name="Watanabe A."/>
            <person name="Idesawa K."/>
            <person name="Ishikawa A."/>
            <person name="Kawashima K."/>
            <person name="Kimura T."/>
            <person name="Kishida Y."/>
            <person name="Kiyokawa C."/>
            <person name="Kohara M."/>
            <person name="Matsumoto M."/>
            <person name="Matsuno A."/>
            <person name="Mochizuki Y."/>
            <person name="Nakayama S."/>
            <person name="Nakazaki N."/>
            <person name="Shimpo S."/>
            <person name="Sugimoto M."/>
            <person name="Takeuchi C."/>
            <person name="Yamada M."/>
            <person name="Tabata S."/>
        </authorList>
    </citation>
    <scope>NUCLEOTIDE SEQUENCE [LARGE SCALE GENOMIC DNA]</scope>
    <source>
        <strain>LMG 29417 / CECT 9101 / MAFF 303099</strain>
    </source>
</reference>
<gene>
    <name evidence="1" type="primary">argG</name>
    <name type="ordered locus">mlr4366</name>
</gene>
<comment type="catalytic activity">
    <reaction evidence="1">
        <text>L-citrulline + L-aspartate + ATP = 2-(N(omega)-L-arginino)succinate + AMP + diphosphate + H(+)</text>
        <dbReference type="Rhea" id="RHEA:10932"/>
        <dbReference type="ChEBI" id="CHEBI:15378"/>
        <dbReference type="ChEBI" id="CHEBI:29991"/>
        <dbReference type="ChEBI" id="CHEBI:30616"/>
        <dbReference type="ChEBI" id="CHEBI:33019"/>
        <dbReference type="ChEBI" id="CHEBI:57472"/>
        <dbReference type="ChEBI" id="CHEBI:57743"/>
        <dbReference type="ChEBI" id="CHEBI:456215"/>
        <dbReference type="EC" id="6.3.4.5"/>
    </reaction>
</comment>
<comment type="pathway">
    <text evidence="1">Amino-acid biosynthesis; L-arginine biosynthesis; L-arginine from L-ornithine and carbamoyl phosphate: step 2/3.</text>
</comment>
<comment type="subunit">
    <text evidence="1">Homotetramer.</text>
</comment>
<comment type="subcellular location">
    <subcellularLocation>
        <location evidence="1">Cytoplasm</location>
    </subcellularLocation>
</comment>
<comment type="similarity">
    <text evidence="1">Belongs to the argininosuccinate synthase family. Type 1 subfamily.</text>
</comment>
<organism>
    <name type="scientific">Mesorhizobium japonicum (strain LMG 29417 / CECT 9101 / MAFF 303099)</name>
    <name type="common">Mesorhizobium loti (strain MAFF 303099)</name>
    <dbReference type="NCBI Taxonomy" id="266835"/>
    <lineage>
        <taxon>Bacteria</taxon>
        <taxon>Pseudomonadati</taxon>
        <taxon>Pseudomonadota</taxon>
        <taxon>Alphaproteobacteria</taxon>
        <taxon>Hyphomicrobiales</taxon>
        <taxon>Phyllobacteriaceae</taxon>
        <taxon>Mesorhizobium</taxon>
    </lineage>
</organism>